<protein>
    <recommendedName>
        <fullName evidence="1">Negative modulator of initiation of replication</fullName>
    </recommendedName>
</protein>
<accession>Q7VLX4</accession>
<sequence>MKTIEVDDELYHYIASRTQAIGESASDILRRLLRLPSSPQPFVLVQPNIAEELNASTKSTNQAKKQTNIEKTVQKFERVLKSDTFVNETKNVRRFLMLLSALHISDQQGFANATAVVTGTERTYFATNEDMLLRCGNGVKAKKIPDSPFWVVTNNSTARKGLILTAVMQSMQMPSHLIDRVRVLFA</sequence>
<organism>
    <name type="scientific">Haemophilus ducreyi (strain 35000HP / ATCC 700724)</name>
    <dbReference type="NCBI Taxonomy" id="233412"/>
    <lineage>
        <taxon>Bacteria</taxon>
        <taxon>Pseudomonadati</taxon>
        <taxon>Pseudomonadota</taxon>
        <taxon>Gammaproteobacteria</taxon>
        <taxon>Pasteurellales</taxon>
        <taxon>Pasteurellaceae</taxon>
        <taxon>Haemophilus</taxon>
    </lineage>
</organism>
<keyword id="KW-0963">Cytoplasm</keyword>
<keyword id="KW-0236">DNA replication inhibitor</keyword>
<keyword id="KW-0238">DNA-binding</keyword>
<keyword id="KW-1185">Reference proteome</keyword>
<gene>
    <name evidence="1" type="primary">seqA</name>
    <name type="ordered locus">HD_1270</name>
</gene>
<proteinExistence type="inferred from homology"/>
<comment type="function">
    <text evidence="1">Negative regulator of replication initiation, which contributes to regulation of DNA replication and ensures that replication initiation occurs exactly once per chromosome per cell cycle. Binds to pairs of hemimethylated GATC sequences in the oriC region, thus preventing assembly of replication proteins and re-initiation at newly replicated origins. Repression is relieved when the region becomes fully methylated.</text>
</comment>
<comment type="subunit">
    <text evidence="1">Homodimer. Polymerizes to form helical filaments.</text>
</comment>
<comment type="subcellular location">
    <subcellularLocation>
        <location evidence="1">Cytoplasm</location>
    </subcellularLocation>
</comment>
<comment type="similarity">
    <text evidence="1">Belongs to the SeqA family.</text>
</comment>
<name>SEQA_HAEDU</name>
<dbReference type="EMBL" id="AE017143">
    <property type="protein sequence ID" value="AAP96096.1"/>
    <property type="molecule type" value="Genomic_DNA"/>
</dbReference>
<dbReference type="RefSeq" id="WP_010945145.1">
    <property type="nucleotide sequence ID" value="NC_002940.2"/>
</dbReference>
<dbReference type="SMR" id="Q7VLX4"/>
<dbReference type="STRING" id="233412.HD_1270"/>
<dbReference type="KEGG" id="hdu:HD_1270"/>
<dbReference type="eggNOG" id="COG3057">
    <property type="taxonomic scope" value="Bacteria"/>
</dbReference>
<dbReference type="HOGENOM" id="CLU_099733_0_0_6"/>
<dbReference type="OrthoDB" id="5591069at2"/>
<dbReference type="Proteomes" id="UP000001022">
    <property type="component" value="Chromosome"/>
</dbReference>
<dbReference type="GO" id="GO:0005737">
    <property type="term" value="C:cytoplasm"/>
    <property type="evidence" value="ECO:0007669"/>
    <property type="project" value="UniProtKB-SubCell"/>
</dbReference>
<dbReference type="GO" id="GO:0003677">
    <property type="term" value="F:DNA binding"/>
    <property type="evidence" value="ECO:0007669"/>
    <property type="project" value="UniProtKB-UniRule"/>
</dbReference>
<dbReference type="GO" id="GO:0032297">
    <property type="term" value="P:negative regulation of DNA-templated DNA replication initiation"/>
    <property type="evidence" value="ECO:0007669"/>
    <property type="project" value="UniProtKB-UniRule"/>
</dbReference>
<dbReference type="GO" id="GO:0006355">
    <property type="term" value="P:regulation of DNA-templated transcription"/>
    <property type="evidence" value="ECO:0007669"/>
    <property type="project" value="InterPro"/>
</dbReference>
<dbReference type="Gene3D" id="1.10.1220.10">
    <property type="entry name" value="Met repressor-like"/>
    <property type="match status" value="1"/>
</dbReference>
<dbReference type="Gene3D" id="1.20.1380.10">
    <property type="entry name" value="Replication modulator SeqA, C-terminal DNA-binding domain"/>
    <property type="match status" value="1"/>
</dbReference>
<dbReference type="HAMAP" id="MF_00908">
    <property type="entry name" value="SeqA"/>
    <property type="match status" value="1"/>
</dbReference>
<dbReference type="InterPro" id="IPR013321">
    <property type="entry name" value="Arc_rbn_hlx_hlx"/>
</dbReference>
<dbReference type="InterPro" id="IPR010985">
    <property type="entry name" value="Ribbon_hlx_hlx"/>
</dbReference>
<dbReference type="InterPro" id="IPR005621">
    <property type="entry name" value="SeqA"/>
</dbReference>
<dbReference type="InterPro" id="IPR026577">
    <property type="entry name" value="SeqA_DNA-bd_C"/>
</dbReference>
<dbReference type="InterPro" id="IPR036835">
    <property type="entry name" value="SeqA_DNA-bd_C_sf"/>
</dbReference>
<dbReference type="InterPro" id="IPR033761">
    <property type="entry name" value="SeqA_N"/>
</dbReference>
<dbReference type="NCBIfam" id="NF008389">
    <property type="entry name" value="PRK11187.1"/>
    <property type="match status" value="1"/>
</dbReference>
<dbReference type="Pfam" id="PF03925">
    <property type="entry name" value="SeqA"/>
    <property type="match status" value="1"/>
</dbReference>
<dbReference type="Pfam" id="PF17206">
    <property type="entry name" value="SeqA_N"/>
    <property type="match status" value="1"/>
</dbReference>
<dbReference type="PIRSF" id="PIRSF019401">
    <property type="entry name" value="SeqA"/>
    <property type="match status" value="1"/>
</dbReference>
<dbReference type="SUPFAM" id="SSF82808">
    <property type="entry name" value="Replication modulator SeqA, C-terminal DNA-binding domain"/>
    <property type="match status" value="1"/>
</dbReference>
<dbReference type="SUPFAM" id="SSF47598">
    <property type="entry name" value="Ribbon-helix-helix"/>
    <property type="match status" value="1"/>
</dbReference>
<feature type="chain" id="PRO_0000413922" description="Negative modulator of initiation of replication">
    <location>
        <begin position="1"/>
        <end position="186"/>
    </location>
</feature>
<reference key="1">
    <citation type="submission" date="2003-06" db="EMBL/GenBank/DDBJ databases">
        <title>The complete genome sequence of Haemophilus ducreyi.</title>
        <authorList>
            <person name="Munson R.S. Jr."/>
            <person name="Ray W.C."/>
            <person name="Mahairas G."/>
            <person name="Sabo P."/>
            <person name="Mungur R."/>
            <person name="Johnson L."/>
            <person name="Nguyen D."/>
            <person name="Wang J."/>
            <person name="Forst C."/>
            <person name="Hood L."/>
        </authorList>
    </citation>
    <scope>NUCLEOTIDE SEQUENCE [LARGE SCALE GENOMIC DNA]</scope>
    <source>
        <strain>35000HP / ATCC 700724</strain>
    </source>
</reference>
<evidence type="ECO:0000255" key="1">
    <source>
        <dbReference type="HAMAP-Rule" id="MF_00908"/>
    </source>
</evidence>